<dbReference type="EC" id="2.1.2.1" evidence="1"/>
<dbReference type="EMBL" id="L43967">
    <property type="protein sequence ID" value="AAC71622.1"/>
    <property type="molecule type" value="Genomic_DNA"/>
</dbReference>
<dbReference type="EMBL" id="U02131">
    <property type="protein sequence ID" value="AAD12409.1"/>
    <property type="molecule type" value="Genomic_DNA"/>
</dbReference>
<dbReference type="PIR" id="F64243">
    <property type="entry name" value="F64243"/>
</dbReference>
<dbReference type="RefSeq" id="WP_009885629.1">
    <property type="nucleotide sequence ID" value="NC_000908.2"/>
</dbReference>
<dbReference type="SMR" id="P47634"/>
<dbReference type="FunCoup" id="P47634">
    <property type="interactions" value="176"/>
</dbReference>
<dbReference type="STRING" id="243273.MG_394"/>
<dbReference type="GeneID" id="88282579"/>
<dbReference type="KEGG" id="mge:MG_394"/>
<dbReference type="eggNOG" id="COG0112">
    <property type="taxonomic scope" value="Bacteria"/>
</dbReference>
<dbReference type="HOGENOM" id="CLU_022477_2_1_14"/>
<dbReference type="InParanoid" id="P47634"/>
<dbReference type="OrthoDB" id="9803846at2"/>
<dbReference type="BioCyc" id="MGEN243273:G1GJ2-490-MONOMER"/>
<dbReference type="UniPathway" id="UPA00193"/>
<dbReference type="UniPathway" id="UPA00288">
    <property type="reaction ID" value="UER01023"/>
</dbReference>
<dbReference type="Proteomes" id="UP000000807">
    <property type="component" value="Chromosome"/>
</dbReference>
<dbReference type="GO" id="GO:0005737">
    <property type="term" value="C:cytoplasm"/>
    <property type="evidence" value="ECO:0000318"/>
    <property type="project" value="GO_Central"/>
</dbReference>
<dbReference type="GO" id="GO:0005829">
    <property type="term" value="C:cytosol"/>
    <property type="evidence" value="ECO:0000318"/>
    <property type="project" value="GO_Central"/>
</dbReference>
<dbReference type="GO" id="GO:0004372">
    <property type="term" value="F:glycine hydroxymethyltransferase activity"/>
    <property type="evidence" value="ECO:0000318"/>
    <property type="project" value="GO_Central"/>
</dbReference>
<dbReference type="GO" id="GO:0030170">
    <property type="term" value="F:pyridoxal phosphate binding"/>
    <property type="evidence" value="ECO:0000318"/>
    <property type="project" value="GO_Central"/>
</dbReference>
<dbReference type="GO" id="GO:0019264">
    <property type="term" value="P:glycine biosynthetic process from serine"/>
    <property type="evidence" value="ECO:0000318"/>
    <property type="project" value="GO_Central"/>
</dbReference>
<dbReference type="GO" id="GO:0035999">
    <property type="term" value="P:tetrahydrofolate interconversion"/>
    <property type="evidence" value="ECO:0007669"/>
    <property type="project" value="UniProtKB-UniRule"/>
</dbReference>
<dbReference type="GO" id="GO:0046653">
    <property type="term" value="P:tetrahydrofolate metabolic process"/>
    <property type="evidence" value="ECO:0000318"/>
    <property type="project" value="GO_Central"/>
</dbReference>
<dbReference type="CDD" id="cd00378">
    <property type="entry name" value="SHMT"/>
    <property type="match status" value="1"/>
</dbReference>
<dbReference type="FunFam" id="3.40.640.10:FF:000001">
    <property type="entry name" value="Serine hydroxymethyltransferase"/>
    <property type="match status" value="1"/>
</dbReference>
<dbReference type="Gene3D" id="3.90.1150.10">
    <property type="entry name" value="Aspartate Aminotransferase, domain 1"/>
    <property type="match status" value="1"/>
</dbReference>
<dbReference type="Gene3D" id="3.40.640.10">
    <property type="entry name" value="Type I PLP-dependent aspartate aminotransferase-like (Major domain)"/>
    <property type="match status" value="1"/>
</dbReference>
<dbReference type="HAMAP" id="MF_00051">
    <property type="entry name" value="SHMT"/>
    <property type="match status" value="1"/>
</dbReference>
<dbReference type="InterPro" id="IPR015424">
    <property type="entry name" value="PyrdxlP-dep_Trfase"/>
</dbReference>
<dbReference type="InterPro" id="IPR015421">
    <property type="entry name" value="PyrdxlP-dep_Trfase_major"/>
</dbReference>
<dbReference type="InterPro" id="IPR015422">
    <property type="entry name" value="PyrdxlP-dep_Trfase_small"/>
</dbReference>
<dbReference type="InterPro" id="IPR001085">
    <property type="entry name" value="Ser_HO-MeTrfase"/>
</dbReference>
<dbReference type="InterPro" id="IPR049943">
    <property type="entry name" value="Ser_HO-MeTrfase-like"/>
</dbReference>
<dbReference type="InterPro" id="IPR019798">
    <property type="entry name" value="Ser_HO-MeTrfase_PLP_BS"/>
</dbReference>
<dbReference type="InterPro" id="IPR039429">
    <property type="entry name" value="SHMT-like_dom"/>
</dbReference>
<dbReference type="NCBIfam" id="NF000586">
    <property type="entry name" value="PRK00011.1"/>
    <property type="match status" value="1"/>
</dbReference>
<dbReference type="PANTHER" id="PTHR11680">
    <property type="entry name" value="SERINE HYDROXYMETHYLTRANSFERASE"/>
    <property type="match status" value="1"/>
</dbReference>
<dbReference type="PANTHER" id="PTHR11680:SF35">
    <property type="entry name" value="SERINE HYDROXYMETHYLTRANSFERASE 1"/>
    <property type="match status" value="1"/>
</dbReference>
<dbReference type="Pfam" id="PF00464">
    <property type="entry name" value="SHMT"/>
    <property type="match status" value="1"/>
</dbReference>
<dbReference type="PIRSF" id="PIRSF000412">
    <property type="entry name" value="SHMT"/>
    <property type="match status" value="1"/>
</dbReference>
<dbReference type="SUPFAM" id="SSF53383">
    <property type="entry name" value="PLP-dependent transferases"/>
    <property type="match status" value="1"/>
</dbReference>
<dbReference type="PROSITE" id="PS00096">
    <property type="entry name" value="SHMT"/>
    <property type="match status" value="1"/>
</dbReference>
<gene>
    <name evidence="1" type="primary">glyA</name>
    <name type="ordered locus">MG394</name>
</gene>
<accession>P47634</accession>
<sequence length="406" mass="44750">MFSKVRLLLNKELQRQRENICLIASENYVSQDILAVTGSVLTNKYAEGYPSKRFYQGCEVVDESENLAIESCKTLFGAQWANVQPHSGSSANYAVYLALLKPGDTILGLDLNCGGHLTHGSPVNFSGKQYQAVTYSLDFETETLDYDAILQIALEHKPKLIICGFSNYSRTVDFKKFSAIAKQVNAYLLADIAHIAGFIAAGLHQNPLPFVDVVTSTTHKTLRGPRGGIIMSNNQAIIKKLDSGVFPGCQGGPLQHVIAAKYVCFKEALNPKFKQYMQQVKDNALAMANWFLKQGYRVVSKGTETHLFSLVVGNGKDVALWLQKANIVLNMNTIPFETKSAFSPSGIRLGTPAMTTRGFKTNDFIFVASLIDKVIKSNGNQKVISQTKTAVLNLLKRFPLYKGLAY</sequence>
<proteinExistence type="inferred from homology"/>
<name>GLYA_MYCGE</name>
<feature type="chain" id="PRO_0000113609" description="Serine hydroxymethyltransferase">
    <location>
        <begin position="1"/>
        <end position="406"/>
    </location>
</feature>
<feature type="binding site" evidence="1">
    <location>
        <position position="111"/>
    </location>
    <ligand>
        <name>(6S)-5,6,7,8-tetrahydrofolate</name>
        <dbReference type="ChEBI" id="CHEBI:57453"/>
    </ligand>
</feature>
<feature type="binding site" evidence="1">
    <location>
        <begin position="115"/>
        <end position="117"/>
    </location>
    <ligand>
        <name>(6S)-5,6,7,8-tetrahydrofolate</name>
        <dbReference type="ChEBI" id="CHEBI:57453"/>
    </ligand>
</feature>
<feature type="binding site" evidence="1">
    <location>
        <begin position="340"/>
        <end position="342"/>
    </location>
    <ligand>
        <name>(6S)-5,6,7,8-tetrahydrofolate</name>
        <dbReference type="ChEBI" id="CHEBI:57453"/>
    </ligand>
</feature>
<feature type="site" description="Plays an important role in substrate specificity" evidence="1">
    <location>
        <position position="219"/>
    </location>
</feature>
<feature type="modified residue" description="N6-(pyridoxal phosphate)lysine" evidence="1">
    <location>
        <position position="220"/>
    </location>
</feature>
<comment type="function">
    <text evidence="1">Catalyzes the reversible interconversion of serine and glycine with tetrahydrofolate (THF) serving as the one-carbon carrier. This reaction serves as the major source of one-carbon groups required for the biosynthesis of purines, thymidylate, methionine, and other important biomolecules. Also exhibits THF-independent aldolase activity toward beta-hydroxyamino acids, producing glycine and aldehydes, via a retro-aldol mechanism.</text>
</comment>
<comment type="catalytic activity">
    <reaction evidence="1">
        <text>(6R)-5,10-methylene-5,6,7,8-tetrahydrofolate + glycine + H2O = (6S)-5,6,7,8-tetrahydrofolate + L-serine</text>
        <dbReference type="Rhea" id="RHEA:15481"/>
        <dbReference type="ChEBI" id="CHEBI:15377"/>
        <dbReference type="ChEBI" id="CHEBI:15636"/>
        <dbReference type="ChEBI" id="CHEBI:33384"/>
        <dbReference type="ChEBI" id="CHEBI:57305"/>
        <dbReference type="ChEBI" id="CHEBI:57453"/>
        <dbReference type="EC" id="2.1.2.1"/>
    </reaction>
</comment>
<comment type="cofactor">
    <cofactor evidence="1">
        <name>pyridoxal 5'-phosphate</name>
        <dbReference type="ChEBI" id="CHEBI:597326"/>
    </cofactor>
</comment>
<comment type="pathway">
    <text evidence="1">One-carbon metabolism; tetrahydrofolate interconversion.</text>
</comment>
<comment type="pathway">
    <text evidence="1">Amino-acid biosynthesis; glycine biosynthesis; glycine from L-serine: step 1/1.</text>
</comment>
<comment type="subunit">
    <text evidence="1">Homodimer.</text>
</comment>
<comment type="subcellular location">
    <subcellularLocation>
        <location evidence="1">Cytoplasm</location>
    </subcellularLocation>
</comment>
<comment type="similarity">
    <text evidence="1">Belongs to the SHMT family.</text>
</comment>
<evidence type="ECO:0000255" key="1">
    <source>
        <dbReference type="HAMAP-Rule" id="MF_00051"/>
    </source>
</evidence>
<protein>
    <recommendedName>
        <fullName evidence="1">Serine hydroxymethyltransferase</fullName>
        <shortName evidence="1">SHMT</shortName>
        <shortName evidence="1">Serine methylase</shortName>
        <ecNumber evidence="1">2.1.2.1</ecNumber>
    </recommendedName>
</protein>
<reference key="1">
    <citation type="journal article" date="1995" name="Science">
        <title>The minimal gene complement of Mycoplasma genitalium.</title>
        <authorList>
            <person name="Fraser C.M."/>
            <person name="Gocayne J.D."/>
            <person name="White O."/>
            <person name="Adams M.D."/>
            <person name="Clayton R.A."/>
            <person name="Fleischmann R.D."/>
            <person name="Bult C.J."/>
            <person name="Kerlavage A.R."/>
            <person name="Sutton G.G."/>
            <person name="Kelley J.M."/>
            <person name="Fritchman J.L."/>
            <person name="Weidman J.F."/>
            <person name="Small K.V."/>
            <person name="Sandusky M."/>
            <person name="Fuhrmann J.L."/>
            <person name="Nguyen D.T."/>
            <person name="Utterback T.R."/>
            <person name="Saudek D.M."/>
            <person name="Phillips C.A."/>
            <person name="Merrick J.M."/>
            <person name="Tomb J.-F."/>
            <person name="Dougherty B.A."/>
            <person name="Bott K.F."/>
            <person name="Hu P.-C."/>
            <person name="Lucier T.S."/>
            <person name="Peterson S.N."/>
            <person name="Smith H.O."/>
            <person name="Hutchison C.A. III"/>
            <person name="Venter J.C."/>
        </authorList>
    </citation>
    <scope>NUCLEOTIDE SEQUENCE [LARGE SCALE GENOMIC DNA]</scope>
    <source>
        <strain>ATCC 33530 / DSM 19775 / NCTC 10195 / G37</strain>
    </source>
</reference>
<reference key="2">
    <citation type="journal article" date="1993" name="J. Bacteriol.">
        <title>A survey of the Mycoplasma genitalium genome by using random sequencing.</title>
        <authorList>
            <person name="Peterson S.N."/>
            <person name="Hu P.-C."/>
            <person name="Bott K.F."/>
            <person name="Hutchison C.A. III"/>
        </authorList>
    </citation>
    <scope>NUCLEOTIDE SEQUENCE [GENOMIC DNA] OF 110-228</scope>
    <source>
        <strain>ATCC 33530 / DSM 19775 / NCTC 10195 / G37</strain>
    </source>
</reference>
<keyword id="KW-0028">Amino-acid biosynthesis</keyword>
<keyword id="KW-0963">Cytoplasm</keyword>
<keyword id="KW-0554">One-carbon metabolism</keyword>
<keyword id="KW-0663">Pyridoxal phosphate</keyword>
<keyword id="KW-1185">Reference proteome</keyword>
<keyword id="KW-0808">Transferase</keyword>
<organism>
    <name type="scientific">Mycoplasma genitalium (strain ATCC 33530 / DSM 19775 / NCTC 10195 / G37)</name>
    <name type="common">Mycoplasmoides genitalium</name>
    <dbReference type="NCBI Taxonomy" id="243273"/>
    <lineage>
        <taxon>Bacteria</taxon>
        <taxon>Bacillati</taxon>
        <taxon>Mycoplasmatota</taxon>
        <taxon>Mycoplasmoidales</taxon>
        <taxon>Mycoplasmoidaceae</taxon>
        <taxon>Mycoplasmoides</taxon>
    </lineage>
</organism>